<accession>A0LLA7</accession>
<proteinExistence type="inferred from homology"/>
<organism>
    <name type="scientific">Syntrophobacter fumaroxidans (strain DSM 10017 / MPOB)</name>
    <dbReference type="NCBI Taxonomy" id="335543"/>
    <lineage>
        <taxon>Bacteria</taxon>
        <taxon>Pseudomonadati</taxon>
        <taxon>Thermodesulfobacteriota</taxon>
        <taxon>Syntrophobacteria</taxon>
        <taxon>Syntrophobacterales</taxon>
        <taxon>Syntrophobacteraceae</taxon>
        <taxon>Syntrophobacter</taxon>
    </lineage>
</organism>
<protein>
    <recommendedName>
        <fullName evidence="1">Putative nickel insertion protein</fullName>
    </recommendedName>
</protein>
<name>Y2531_SYNFM</name>
<reference key="1">
    <citation type="submission" date="2006-10" db="EMBL/GenBank/DDBJ databases">
        <title>Complete sequence of Syntrophobacter fumaroxidans MPOB.</title>
        <authorList>
            <consortium name="US DOE Joint Genome Institute"/>
            <person name="Copeland A."/>
            <person name="Lucas S."/>
            <person name="Lapidus A."/>
            <person name="Barry K."/>
            <person name="Detter J.C."/>
            <person name="Glavina del Rio T."/>
            <person name="Hammon N."/>
            <person name="Israni S."/>
            <person name="Pitluck S."/>
            <person name="Goltsman E.G."/>
            <person name="Martinez M."/>
            <person name="Schmutz J."/>
            <person name="Larimer F."/>
            <person name="Land M."/>
            <person name="Hauser L."/>
            <person name="Kyrpides N."/>
            <person name="Kim E."/>
            <person name="Boone D.R."/>
            <person name="Brockman F."/>
            <person name="Culley D."/>
            <person name="Ferry J."/>
            <person name="Gunsalus R."/>
            <person name="McInerney M.J."/>
            <person name="Morrison M."/>
            <person name="Plugge C."/>
            <person name="Rohlin L."/>
            <person name="Scholten J."/>
            <person name="Sieber J."/>
            <person name="Stams A.J.M."/>
            <person name="Worm P."/>
            <person name="Henstra A.M."/>
            <person name="Richardson P."/>
        </authorList>
    </citation>
    <scope>NUCLEOTIDE SEQUENCE [LARGE SCALE GENOMIC DNA]</scope>
    <source>
        <strain>DSM 10017 / MPOB</strain>
    </source>
</reference>
<feature type="chain" id="PRO_1000064658" description="Putative nickel insertion protein">
    <location>
        <begin position="1"/>
        <end position="388"/>
    </location>
</feature>
<evidence type="ECO:0000255" key="1">
    <source>
        <dbReference type="HAMAP-Rule" id="MF_01074"/>
    </source>
</evidence>
<gene>
    <name type="ordered locus">Sfum_2531</name>
</gene>
<sequence length="388" mass="42214">MKTAYFDCFSGISGDMVLGALLDLGLPLDVLSGELKKIAVSGYVLSAERERRGSIAGTRVRIDIEDQPARSYREIARLIGESALESPVKEKSLAVFEKLALAEARVHQVPPGDVHFHEVGALDSILDIVGAAIGLHHLGIERLCASRVPLGGGFVETRHGLLPLPAPATVLLLEGVPVYDNGIQRELTTPTGAAILAALAESFGPVPDMVVRSTGYGVGTHPCADPPNLLRVLVGEASPGLLRRRLLLIETSIDDMNPEFYGHVMERLFDAGALDVNLVPAQMKKNRPAVILRVLLEPALQAAVTEIVFRETTSLGVRIQEVDRVELPREIGEVDTPYGRCRVKWVRTPWGERRATPEYEDCKRIALEQGVPIRRIYEEVLAAAGRGQ</sequence>
<dbReference type="EMBL" id="CP000478">
    <property type="protein sequence ID" value="ABK18209.1"/>
    <property type="molecule type" value="Genomic_DNA"/>
</dbReference>
<dbReference type="RefSeq" id="WP_011699377.1">
    <property type="nucleotide sequence ID" value="NC_008554.1"/>
</dbReference>
<dbReference type="SMR" id="A0LLA7"/>
<dbReference type="STRING" id="335543.Sfum_2531"/>
<dbReference type="KEGG" id="sfu:Sfum_2531"/>
<dbReference type="eggNOG" id="COG1641">
    <property type="taxonomic scope" value="Bacteria"/>
</dbReference>
<dbReference type="HOGENOM" id="CLU_028523_2_1_7"/>
<dbReference type="InParanoid" id="A0LLA7"/>
<dbReference type="OrthoDB" id="9765625at2"/>
<dbReference type="Proteomes" id="UP000001784">
    <property type="component" value="Chromosome"/>
</dbReference>
<dbReference type="GO" id="GO:0016829">
    <property type="term" value="F:lyase activity"/>
    <property type="evidence" value="ECO:0007669"/>
    <property type="project" value="UniProtKB-UniRule"/>
</dbReference>
<dbReference type="GO" id="GO:0016151">
    <property type="term" value="F:nickel cation binding"/>
    <property type="evidence" value="ECO:0007669"/>
    <property type="project" value="UniProtKB-UniRule"/>
</dbReference>
<dbReference type="Gene3D" id="3.10.20.300">
    <property type="entry name" value="mk0293 like domain"/>
    <property type="match status" value="1"/>
</dbReference>
<dbReference type="Gene3D" id="3.30.70.1380">
    <property type="entry name" value="Transcriptional regulatory protein pf0864 domain like"/>
    <property type="match status" value="1"/>
</dbReference>
<dbReference type="HAMAP" id="MF_01074">
    <property type="entry name" value="LarC"/>
    <property type="match status" value="1"/>
</dbReference>
<dbReference type="InterPro" id="IPR002822">
    <property type="entry name" value="Ni_insertion"/>
</dbReference>
<dbReference type="NCBIfam" id="TIGR00299">
    <property type="entry name" value="nickel pincer cofactor biosynthesis protein LarC"/>
    <property type="match status" value="1"/>
</dbReference>
<dbReference type="PANTHER" id="PTHR36566">
    <property type="entry name" value="NICKEL INSERTION PROTEIN-RELATED"/>
    <property type="match status" value="1"/>
</dbReference>
<dbReference type="PANTHER" id="PTHR36566:SF1">
    <property type="entry name" value="PYRIDINIUM-3,5-BISTHIOCARBOXYLIC ACID MONONUCLEOTIDE NICKEL INSERTION PROTEIN"/>
    <property type="match status" value="1"/>
</dbReference>
<dbReference type="Pfam" id="PF01969">
    <property type="entry name" value="Ni_insertion"/>
    <property type="match status" value="1"/>
</dbReference>
<comment type="similarity">
    <text evidence="1">Belongs to the LarC family.</text>
</comment>
<keyword id="KW-0533">Nickel</keyword>
<keyword id="KW-1185">Reference proteome</keyword>